<feature type="transit peptide" description="Chloroplast" evidence="2">
    <location>
        <begin position="1"/>
        <end position="29"/>
    </location>
</feature>
<feature type="chain" id="PRO_0000003653" description="Chlorophyll a-b binding protein CP29.3, chloroplastic">
    <location>
        <begin position="30"/>
        <end position="276"/>
    </location>
</feature>
<feature type="transmembrane region" description="Helical" evidence="2">
    <location>
        <begin position="147"/>
        <end position="167"/>
    </location>
</feature>
<feature type="transmembrane region" description="Helical" evidence="2">
    <location>
        <begin position="185"/>
        <end position="205"/>
    </location>
</feature>
<feature type="transmembrane region" description="Helical" evidence="2">
    <location>
        <begin position="248"/>
        <end position="268"/>
    </location>
</feature>
<feature type="region of interest" description="Disordered" evidence="3">
    <location>
        <begin position="1"/>
        <end position="53"/>
    </location>
</feature>
<feature type="compositionally biased region" description="Basic residues" evidence="3">
    <location>
        <begin position="36"/>
        <end position="48"/>
    </location>
</feature>
<feature type="binding site" description="axial binding residue" evidence="1">
    <location>
        <position position="59"/>
    </location>
    <ligand>
        <name>chlorophyll b</name>
        <dbReference type="ChEBI" id="CHEBI:61721"/>
        <label>1</label>
    </ligand>
    <ligandPart>
        <name>Mg</name>
        <dbReference type="ChEBI" id="CHEBI:25107"/>
    </ligandPart>
</feature>
<feature type="binding site" evidence="1">
    <location>
        <position position="79"/>
    </location>
    <ligand>
        <name>chlorophyll a</name>
        <dbReference type="ChEBI" id="CHEBI:58416"/>
        <label>1</label>
    </ligand>
</feature>
<feature type="binding site" description="axial binding residue" evidence="1">
    <location>
        <position position="141"/>
    </location>
    <ligand>
        <name>chlorophyll a</name>
        <dbReference type="ChEBI" id="CHEBI:58416"/>
        <label>1</label>
    </ligand>
    <ligandPart>
        <name>Mg</name>
        <dbReference type="ChEBI" id="CHEBI:25107"/>
    </ligandPart>
</feature>
<feature type="binding site" description="axial binding residue" evidence="1">
    <location>
        <position position="144"/>
    </location>
    <ligand>
        <name>chlorophyll a</name>
        <dbReference type="ChEBI" id="CHEBI:58416"/>
        <label>2</label>
    </ligand>
    <ligandPart>
        <name>Mg</name>
        <dbReference type="ChEBI" id="CHEBI:25107"/>
    </ligandPart>
</feature>
<feature type="binding site" evidence="1">
    <location>
        <position position="181"/>
    </location>
    <ligand>
        <name>chlorophyll a</name>
        <dbReference type="ChEBI" id="CHEBI:58416"/>
        <label>3</label>
    </ligand>
</feature>
<feature type="binding site" description="axial binding residue" evidence="1">
    <location>
        <position position="204"/>
    </location>
    <ligand>
        <name>chlorophyll b</name>
        <dbReference type="ChEBI" id="CHEBI:61721"/>
        <label>3</label>
    </ligand>
    <ligandPart>
        <name>Mg</name>
        <dbReference type="ChEBI" id="CHEBI:25107"/>
    </ligandPart>
</feature>
<feature type="binding site" evidence="1">
    <location>
        <position position="207"/>
    </location>
    <ligand>
        <name>chlorophyll b</name>
        <dbReference type="ChEBI" id="CHEBI:61721"/>
        <label>4</label>
    </ligand>
</feature>
<feature type="binding site" description="axial binding residue" evidence="1">
    <location>
        <position position="242"/>
    </location>
    <ligand>
        <name>chlorophyll a</name>
        <dbReference type="ChEBI" id="CHEBI:58416"/>
        <label>3</label>
    </ligand>
    <ligandPart>
        <name>Mg</name>
        <dbReference type="ChEBI" id="CHEBI:25107"/>
    </ligandPart>
</feature>
<feature type="binding site" description="axial binding residue" evidence="1">
    <location>
        <position position="245"/>
    </location>
    <ligand>
        <name>chlorophyll a</name>
        <dbReference type="ChEBI" id="CHEBI:58416"/>
        <label>4</label>
    </ligand>
    <ligandPart>
        <name>Mg</name>
        <dbReference type="ChEBI" id="CHEBI:25107"/>
    </ligandPart>
</feature>
<feature type="binding site" evidence="1">
    <location>
        <position position="247"/>
    </location>
    <ligand>
        <name>chlorophyll a</name>
        <dbReference type="ChEBI" id="CHEBI:58416"/>
        <label>1</label>
    </ligand>
</feature>
<feature type="binding site" description="axial binding residue" evidence="1">
    <location>
        <position position="259"/>
    </location>
    <ligand>
        <name>chlorophyll a</name>
        <dbReference type="ChEBI" id="CHEBI:58416"/>
        <label>5</label>
    </ligand>
    <ligandPart>
        <name>Mg</name>
        <dbReference type="ChEBI" id="CHEBI:25107"/>
    </ligandPart>
</feature>
<reference key="1">
    <citation type="journal article" date="1999" name="Trends Plant Sci.">
        <title>A guide to the Lhc genes and their relatives in Arabidopsis.</title>
        <authorList>
            <person name="Jansson S."/>
        </authorList>
    </citation>
    <scope>NUCLEOTIDE SEQUENCE [MRNA]</scope>
</reference>
<reference key="2">
    <citation type="journal article" date="1999" name="Nature">
        <title>Sequence and analysis of chromosome 2 of the plant Arabidopsis thaliana.</title>
        <authorList>
            <person name="Lin X."/>
            <person name="Kaul S."/>
            <person name="Rounsley S.D."/>
            <person name="Shea T.P."/>
            <person name="Benito M.-I."/>
            <person name="Town C.D."/>
            <person name="Fujii C.Y."/>
            <person name="Mason T.M."/>
            <person name="Bowman C.L."/>
            <person name="Barnstead M.E."/>
            <person name="Feldblyum T.V."/>
            <person name="Buell C.R."/>
            <person name="Ketchum K.A."/>
            <person name="Lee J.J."/>
            <person name="Ronning C.M."/>
            <person name="Koo H.L."/>
            <person name="Moffat K.S."/>
            <person name="Cronin L.A."/>
            <person name="Shen M."/>
            <person name="Pai G."/>
            <person name="Van Aken S."/>
            <person name="Umayam L."/>
            <person name="Tallon L.J."/>
            <person name="Gill J.E."/>
            <person name="Adams M.D."/>
            <person name="Carrera A.J."/>
            <person name="Creasy T.H."/>
            <person name="Goodman H.M."/>
            <person name="Somerville C.R."/>
            <person name="Copenhaver G.P."/>
            <person name="Preuss D."/>
            <person name="Nierman W.C."/>
            <person name="White O."/>
            <person name="Eisen J.A."/>
            <person name="Salzberg S.L."/>
            <person name="Fraser C.M."/>
            <person name="Venter J.C."/>
        </authorList>
    </citation>
    <scope>NUCLEOTIDE SEQUENCE [LARGE SCALE GENOMIC DNA]</scope>
    <source>
        <strain>cv. Columbia</strain>
    </source>
</reference>
<reference key="3">
    <citation type="journal article" date="2017" name="Plant J.">
        <title>Araport11: a complete reannotation of the Arabidopsis thaliana reference genome.</title>
        <authorList>
            <person name="Cheng C.Y."/>
            <person name="Krishnakumar V."/>
            <person name="Chan A.P."/>
            <person name="Thibaud-Nissen F."/>
            <person name="Schobel S."/>
            <person name="Town C.D."/>
        </authorList>
    </citation>
    <scope>GENOME REANNOTATION</scope>
    <source>
        <strain>cv. Columbia</strain>
    </source>
</reference>
<reference key="4">
    <citation type="journal article" date="2003" name="Science">
        <title>Empirical analysis of transcriptional activity in the Arabidopsis genome.</title>
        <authorList>
            <person name="Yamada K."/>
            <person name="Lim J."/>
            <person name="Dale J.M."/>
            <person name="Chen H."/>
            <person name="Shinn P."/>
            <person name="Palm C.J."/>
            <person name="Southwick A.M."/>
            <person name="Wu H.C."/>
            <person name="Kim C.J."/>
            <person name="Nguyen M."/>
            <person name="Pham P.K."/>
            <person name="Cheuk R.F."/>
            <person name="Karlin-Newmann G."/>
            <person name="Liu S.X."/>
            <person name="Lam B."/>
            <person name="Sakano H."/>
            <person name="Wu T."/>
            <person name="Yu G."/>
            <person name="Miranda M."/>
            <person name="Quach H.L."/>
            <person name="Tripp M."/>
            <person name="Chang C.H."/>
            <person name="Lee J.M."/>
            <person name="Toriumi M.J."/>
            <person name="Chan M.M."/>
            <person name="Tang C.C."/>
            <person name="Onodera C.S."/>
            <person name="Deng J.M."/>
            <person name="Akiyama K."/>
            <person name="Ansari Y."/>
            <person name="Arakawa T."/>
            <person name="Banh J."/>
            <person name="Banno F."/>
            <person name="Bowser L."/>
            <person name="Brooks S.Y."/>
            <person name="Carninci P."/>
            <person name="Chao Q."/>
            <person name="Choy N."/>
            <person name="Enju A."/>
            <person name="Goldsmith A.D."/>
            <person name="Gurjal M."/>
            <person name="Hansen N.F."/>
            <person name="Hayashizaki Y."/>
            <person name="Johnson-Hopson C."/>
            <person name="Hsuan V.W."/>
            <person name="Iida K."/>
            <person name="Karnes M."/>
            <person name="Khan S."/>
            <person name="Koesema E."/>
            <person name="Ishida J."/>
            <person name="Jiang P.X."/>
            <person name="Jones T."/>
            <person name="Kawai J."/>
            <person name="Kamiya A."/>
            <person name="Meyers C."/>
            <person name="Nakajima M."/>
            <person name="Narusaka M."/>
            <person name="Seki M."/>
            <person name="Sakurai T."/>
            <person name="Satou M."/>
            <person name="Tamse R."/>
            <person name="Vaysberg M."/>
            <person name="Wallender E.K."/>
            <person name="Wong C."/>
            <person name="Yamamura Y."/>
            <person name="Yuan S."/>
            <person name="Shinozaki K."/>
            <person name="Davis R.W."/>
            <person name="Theologis A."/>
            <person name="Ecker J.R."/>
        </authorList>
    </citation>
    <scope>NUCLEOTIDE SEQUENCE [LARGE SCALE MRNA]</scope>
    <source>
        <strain>cv. Columbia</strain>
    </source>
</reference>
<reference key="5">
    <citation type="submission" date="2002-03" db="EMBL/GenBank/DDBJ databases">
        <title>Full-length cDNA from Arabidopsis thaliana.</title>
        <authorList>
            <person name="Brover V.V."/>
            <person name="Troukhan M.E."/>
            <person name="Alexandrov N.A."/>
            <person name="Lu Y.-P."/>
            <person name="Flavell R.B."/>
            <person name="Feldmann K.A."/>
        </authorList>
    </citation>
    <scope>NUCLEOTIDE SEQUENCE [LARGE SCALE MRNA]</scope>
</reference>
<proteinExistence type="evidence at transcript level"/>
<dbReference type="EMBL" id="AF134128">
    <property type="protein sequence ID" value="AAD28775.1"/>
    <property type="molecule type" value="mRNA"/>
</dbReference>
<dbReference type="EMBL" id="CP002685">
    <property type="protein sequence ID" value="AEC09778.1"/>
    <property type="molecule type" value="Genomic_DNA"/>
</dbReference>
<dbReference type="EMBL" id="AY070392">
    <property type="protein sequence ID" value="AAL49888.1"/>
    <property type="molecule type" value="mRNA"/>
</dbReference>
<dbReference type="EMBL" id="AY096735">
    <property type="protein sequence ID" value="AAM20369.1"/>
    <property type="molecule type" value="mRNA"/>
</dbReference>
<dbReference type="EMBL" id="AY088398">
    <property type="protein sequence ID" value="AAM65936.1"/>
    <property type="molecule type" value="mRNA"/>
</dbReference>
<dbReference type="PIR" id="T52316">
    <property type="entry name" value="T52316"/>
</dbReference>
<dbReference type="RefSeq" id="NP_181539.1">
    <molecule id="Q9S7W1-1"/>
    <property type="nucleotide sequence ID" value="NM_129568.3"/>
</dbReference>
<dbReference type="SMR" id="Q9S7W1"/>
<dbReference type="BioGRID" id="3937">
    <property type="interactions" value="21"/>
</dbReference>
<dbReference type="FunCoup" id="Q9S7W1">
    <property type="interactions" value="16"/>
</dbReference>
<dbReference type="STRING" id="3702.Q9S7W1"/>
<dbReference type="iPTMnet" id="Q9S7W1"/>
<dbReference type="PaxDb" id="3702-AT2G40100.1"/>
<dbReference type="ProteomicsDB" id="223868">
    <molecule id="Q9S7W1-1"/>
</dbReference>
<dbReference type="EnsemblPlants" id="AT2G40100.1">
    <molecule id="Q9S7W1-1"/>
    <property type="protein sequence ID" value="AT2G40100.1"/>
    <property type="gene ID" value="AT2G40100"/>
</dbReference>
<dbReference type="GeneID" id="818599"/>
<dbReference type="Gramene" id="AT2G40100.1">
    <molecule id="Q9S7W1-1"/>
    <property type="protein sequence ID" value="AT2G40100.1"/>
    <property type="gene ID" value="AT2G40100"/>
</dbReference>
<dbReference type="KEGG" id="ath:AT2G40100"/>
<dbReference type="Araport" id="AT2G40100"/>
<dbReference type="TAIR" id="AT2G40100">
    <property type="gene designation" value="LHCB4.3"/>
</dbReference>
<dbReference type="eggNOG" id="ENOG502QRH9">
    <property type="taxonomic scope" value="Eukaryota"/>
</dbReference>
<dbReference type="HOGENOM" id="CLU_057943_0_0_1"/>
<dbReference type="InParanoid" id="Q9S7W1"/>
<dbReference type="OMA" id="YIEYQRN"/>
<dbReference type="OrthoDB" id="423598at2759"/>
<dbReference type="PhylomeDB" id="Q9S7W1"/>
<dbReference type="CD-CODE" id="4299E36E">
    <property type="entry name" value="Nucleolus"/>
</dbReference>
<dbReference type="PRO" id="PR:Q9S7W1"/>
<dbReference type="Proteomes" id="UP000006548">
    <property type="component" value="Chromosome 2"/>
</dbReference>
<dbReference type="ExpressionAtlas" id="Q9S7W1">
    <property type="expression patterns" value="baseline and differential"/>
</dbReference>
<dbReference type="GO" id="GO:0009507">
    <property type="term" value="C:chloroplast"/>
    <property type="evidence" value="ECO:0007005"/>
    <property type="project" value="TAIR"/>
</dbReference>
<dbReference type="GO" id="GO:0009534">
    <property type="term" value="C:chloroplast thylakoid"/>
    <property type="evidence" value="ECO:0007005"/>
    <property type="project" value="TAIR"/>
</dbReference>
<dbReference type="GO" id="GO:0009535">
    <property type="term" value="C:chloroplast thylakoid membrane"/>
    <property type="evidence" value="ECO:0007005"/>
    <property type="project" value="TAIR"/>
</dbReference>
<dbReference type="GO" id="GO:0005794">
    <property type="term" value="C:Golgi apparatus"/>
    <property type="evidence" value="ECO:0007005"/>
    <property type="project" value="TAIR"/>
</dbReference>
<dbReference type="GO" id="GO:0009522">
    <property type="term" value="C:photosystem I"/>
    <property type="evidence" value="ECO:0007669"/>
    <property type="project" value="UniProtKB-KW"/>
</dbReference>
<dbReference type="GO" id="GO:0009523">
    <property type="term" value="C:photosystem II"/>
    <property type="evidence" value="ECO:0007669"/>
    <property type="project" value="UniProtKB-KW"/>
</dbReference>
<dbReference type="GO" id="GO:0009579">
    <property type="term" value="C:thylakoid"/>
    <property type="evidence" value="ECO:0007005"/>
    <property type="project" value="TAIR"/>
</dbReference>
<dbReference type="GO" id="GO:0016168">
    <property type="term" value="F:chlorophyll binding"/>
    <property type="evidence" value="ECO:0007669"/>
    <property type="project" value="UniProtKB-KW"/>
</dbReference>
<dbReference type="GO" id="GO:0046872">
    <property type="term" value="F:metal ion binding"/>
    <property type="evidence" value="ECO:0007669"/>
    <property type="project" value="UniProtKB-KW"/>
</dbReference>
<dbReference type="GO" id="GO:0009765">
    <property type="term" value="P:photosynthesis, light harvesting"/>
    <property type="evidence" value="ECO:0007669"/>
    <property type="project" value="InterPro"/>
</dbReference>
<dbReference type="Gene3D" id="1.10.3460.10">
    <property type="entry name" value="Chlorophyll a/b binding protein domain"/>
    <property type="match status" value="1"/>
</dbReference>
<dbReference type="InterPro" id="IPR001344">
    <property type="entry name" value="Chloro_AB-bd_pln"/>
</dbReference>
<dbReference type="InterPro" id="IPR022796">
    <property type="entry name" value="Chloroa_b-bind"/>
</dbReference>
<dbReference type="PANTHER" id="PTHR21649">
    <property type="entry name" value="CHLOROPHYLL A/B BINDING PROTEIN"/>
    <property type="match status" value="1"/>
</dbReference>
<dbReference type="Pfam" id="PF00504">
    <property type="entry name" value="Chloroa_b-bind"/>
    <property type="match status" value="1"/>
</dbReference>
<dbReference type="SUPFAM" id="SSF103511">
    <property type="entry name" value="Chlorophyll a-b binding protein"/>
    <property type="match status" value="1"/>
</dbReference>
<comment type="function">
    <text>The light-harvesting complex (LHC) functions as a light receptor, it captures and delivers excitation energy to photosystems with which it is closely associated.</text>
</comment>
<comment type="cofactor">
    <text evidence="1">Binds at least 14 chlorophylls (8 Chl-a and 6 Chl-b) and carotenoids such as lutein and neoxanthin.</text>
</comment>
<comment type="subunit">
    <text>The LHC complex consists of chlorophyll a-b binding proteins.</text>
</comment>
<comment type="subcellular location">
    <subcellularLocation>
        <location>Plastid</location>
        <location>Chloroplast thylakoid membrane</location>
        <topology>Multi-pass membrane protein</topology>
    </subcellularLocation>
</comment>
<comment type="alternative products">
    <event type="alternative splicing"/>
    <isoform>
        <id>Q9S7W1-1</id>
        <name>1</name>
        <sequence type="displayed"/>
    </isoform>
    <text>A number of isoforms are produced. According to EST sequences.</text>
</comment>
<comment type="domain">
    <text>The N-terminus of the protein extends into the stroma where it is involved with adhesion of granal membranes and post-translational modifications; both are believed to mediate the distribution of excitation energy between photosystems I and II.</text>
</comment>
<comment type="PTM">
    <text evidence="1">Photoregulated by reversible phosphorylation of its threonine residues.</text>
</comment>
<comment type="similarity">
    <text evidence="4">Belongs to the light-harvesting chlorophyll a/b-binding (LHC) protein family.</text>
</comment>
<name>CB4C_ARATH</name>
<keyword id="KW-0025">Alternative splicing</keyword>
<keyword id="KW-0148">Chlorophyll</keyword>
<keyword id="KW-0150">Chloroplast</keyword>
<keyword id="KW-0157">Chromophore</keyword>
<keyword id="KW-0460">Magnesium</keyword>
<keyword id="KW-0472">Membrane</keyword>
<keyword id="KW-0479">Metal-binding</keyword>
<keyword id="KW-0597">Phosphoprotein</keyword>
<keyword id="KW-0602">Photosynthesis</keyword>
<keyword id="KW-0603">Photosystem I</keyword>
<keyword id="KW-0604">Photosystem II</keyword>
<keyword id="KW-0934">Plastid</keyword>
<keyword id="KW-1185">Reference proteome</keyword>
<keyword id="KW-0793">Thylakoid</keyword>
<keyword id="KW-0809">Transit peptide</keyword>
<keyword id="KW-0812">Transmembrane</keyword>
<keyword id="KW-1133">Transmembrane helix</keyword>
<evidence type="ECO:0000250" key="1"/>
<evidence type="ECO:0000255" key="2"/>
<evidence type="ECO:0000256" key="3">
    <source>
        <dbReference type="SAM" id="MobiDB-lite"/>
    </source>
</evidence>
<evidence type="ECO:0000305" key="4"/>
<protein>
    <recommendedName>
        <fullName>Chlorophyll a-b binding protein CP29.3, chloroplastic</fullName>
    </recommendedName>
    <alternativeName>
        <fullName>LHCB4.3</fullName>
    </alternativeName>
    <alternativeName>
        <fullName>LHCII protein 4.3</fullName>
    </alternativeName>
</protein>
<accession>Q9S7W1</accession>
<accession>Q8L9J2</accession>
<organism>
    <name type="scientific">Arabidopsis thaliana</name>
    <name type="common">Mouse-ear cress</name>
    <dbReference type="NCBI Taxonomy" id="3702"/>
    <lineage>
        <taxon>Eukaryota</taxon>
        <taxon>Viridiplantae</taxon>
        <taxon>Streptophyta</taxon>
        <taxon>Embryophyta</taxon>
        <taxon>Tracheophyta</taxon>
        <taxon>Spermatophyta</taxon>
        <taxon>Magnoliopsida</taxon>
        <taxon>eudicotyledons</taxon>
        <taxon>Gunneridae</taxon>
        <taxon>Pentapetalae</taxon>
        <taxon>rosids</taxon>
        <taxon>malvids</taxon>
        <taxon>Brassicales</taxon>
        <taxon>Brassicaceae</taxon>
        <taxon>Camelineae</taxon>
        <taxon>Arabidopsis</taxon>
    </lineage>
</organism>
<sequence>MATTTAAAASGIFGIRIQDPRPGTGRVQARFGFSFGKKKPAPPPKKSRQVQDDGDRLVWFPGANPPEWLDGSMIGDRGFDPFGLGKPAEYLQYDFDGLDQNLAKNVAGDIIGIIQESSEIKPTPFQPYTEVFGIQRFRECELIHGRWAMLGTLGAIAVEALTGIAWQDAGKVELVEGSSYLGQPLPFSLTTLIWIEVLVVGYIEFQRNSELDPEKRIYPGGYFDPLGLAADPEKLDTLKLAEIKHSRLAMVAFLIFALQAAFTGKGPVSFLATFNN</sequence>
<gene>
    <name type="primary">LHCB4.3</name>
    <name type="ordered locus">At2g40100</name>
    <name type="ORF">F27I1.2</name>
</gene>